<protein>
    <recommendedName>
        <fullName>Trans-acting enoyl reductase</fullName>
        <ecNumber>1.3.1.-</ecNumber>
    </recommendedName>
</protein>
<evidence type="ECO:0000250" key="1"/>
<evidence type="ECO:0000305" key="2"/>
<reference key="1">
    <citation type="journal article" date="2007" name="Proc. Natl. Acad. Sci. U.S.A.">
        <title>Genome plasticity of BCG and impact on vaccine efficacy.</title>
        <authorList>
            <person name="Brosch R."/>
            <person name="Gordon S.V."/>
            <person name="Garnier T."/>
            <person name="Eiglmeier K."/>
            <person name="Frigui W."/>
            <person name="Valenti P."/>
            <person name="Dos Santos S."/>
            <person name="Duthoy S."/>
            <person name="Lacroix C."/>
            <person name="Garcia-Pelayo C."/>
            <person name="Inwald J.K."/>
            <person name="Golby P."/>
            <person name="Garcia J.N."/>
            <person name="Hewinson R.G."/>
            <person name="Behr M.A."/>
            <person name="Quail M.A."/>
            <person name="Churcher C."/>
            <person name="Barrell B.G."/>
            <person name="Parkhill J."/>
            <person name="Cole S.T."/>
        </authorList>
    </citation>
    <scope>NUCLEOTIDE SEQUENCE [LARGE SCALE GENOMIC DNA]</scope>
    <source>
        <strain>BCG / Pasteur 1173P2</strain>
    </source>
</reference>
<sequence length="418" mass="45104">MSPAEREFDIVLYGATGFSGKLTAEHLAHSGSTARIALAGRSSERLRGVRMMLGPNAADWPLILADASQPLTLEAMAARAQVVLTTVGPYTRYGLPLVAACAKAGTDYADLTGELMFCRNSIDLYHKQAADTGARIILACGFDSIPSDLNVYQLYRRSVEDGTGELCDTDLVLRSFSQRWVSGGSVATYSEAMRTASSDPEARRLVTDPYTLTTDRGAEPELGAQPDFLRRPGRDLAPELAGFWTGGFVQAPFNTRIVRRSNALQEWAYGRRFRYSETMSLGKSMAAPILAAAVTGTVAGTIGLGNKYFDRLPRRLVERVTPKPGTGPSRKTQERGHYTFETYTTTTTGARYRATFAHNVDAYKSTAVLLAQSGLALALDRDRLAELRGVLTPAAAMGDALLARLPGAGVVMGTTRLS</sequence>
<name>TAER_MYCBP</name>
<gene>
    <name type="ordered locus">BCG_2974</name>
</gene>
<proteinExistence type="inferred from homology"/>
<organism>
    <name type="scientific">Mycobacterium bovis (strain BCG / Pasteur 1173P2)</name>
    <dbReference type="NCBI Taxonomy" id="410289"/>
    <lineage>
        <taxon>Bacteria</taxon>
        <taxon>Bacillati</taxon>
        <taxon>Actinomycetota</taxon>
        <taxon>Actinomycetes</taxon>
        <taxon>Mycobacteriales</taxon>
        <taxon>Mycobacteriaceae</taxon>
        <taxon>Mycobacterium</taxon>
        <taxon>Mycobacterium tuberculosis complex</taxon>
    </lineage>
</organism>
<feature type="chain" id="PRO_0000304692" description="Trans-acting enoyl reductase">
    <location>
        <begin position="1"/>
        <end position="418"/>
    </location>
</feature>
<dbReference type="EC" id="1.3.1.-"/>
<dbReference type="EMBL" id="AM408590">
    <property type="protein sequence ID" value="CAL72963.1"/>
    <property type="molecule type" value="Genomic_DNA"/>
</dbReference>
<dbReference type="RefSeq" id="WP_003414903.1">
    <property type="nucleotide sequence ID" value="NC_008769.1"/>
</dbReference>
<dbReference type="KEGG" id="mbb:BCG_2974"/>
<dbReference type="HOGENOM" id="CLU_031002_0_2_11"/>
<dbReference type="Proteomes" id="UP000001472">
    <property type="component" value="Chromosome"/>
</dbReference>
<dbReference type="GO" id="GO:0005886">
    <property type="term" value="C:plasma membrane"/>
    <property type="evidence" value="ECO:0007669"/>
    <property type="project" value="TreeGrafter"/>
</dbReference>
<dbReference type="GO" id="GO:0016491">
    <property type="term" value="F:oxidoreductase activity"/>
    <property type="evidence" value="ECO:0007669"/>
    <property type="project" value="UniProtKB-KW"/>
</dbReference>
<dbReference type="GO" id="GO:0009247">
    <property type="term" value="P:glycolipid biosynthetic process"/>
    <property type="evidence" value="ECO:0007669"/>
    <property type="project" value="TreeGrafter"/>
</dbReference>
<dbReference type="FunFam" id="3.40.50.720:FF:000413">
    <property type="entry name" value="Trans-acting enoyl reductase"/>
    <property type="match status" value="1"/>
</dbReference>
<dbReference type="Gene3D" id="3.40.50.720">
    <property type="entry name" value="NAD(P)-binding Rossmann-like Domain"/>
    <property type="match status" value="1"/>
</dbReference>
<dbReference type="InterPro" id="IPR036291">
    <property type="entry name" value="NAD(P)-bd_dom_sf"/>
</dbReference>
<dbReference type="InterPro" id="IPR051276">
    <property type="entry name" value="Saccharopine_DH-like_oxidrdct"/>
</dbReference>
<dbReference type="InterPro" id="IPR005097">
    <property type="entry name" value="Sacchrp_dh_NADP-bd"/>
</dbReference>
<dbReference type="PANTHER" id="PTHR12286">
    <property type="entry name" value="SACCHAROPINE DEHYDROGENASE-LIKE OXIDOREDUCTASE"/>
    <property type="match status" value="1"/>
</dbReference>
<dbReference type="PANTHER" id="PTHR12286:SF5">
    <property type="entry name" value="SACCHAROPINE DEHYDROGENASE-LIKE OXIDOREDUCTASE"/>
    <property type="match status" value="1"/>
</dbReference>
<dbReference type="Pfam" id="PF03435">
    <property type="entry name" value="Sacchrp_dh_NADP"/>
    <property type="match status" value="1"/>
</dbReference>
<dbReference type="SUPFAM" id="SSF51735">
    <property type="entry name" value="NAD(P)-binding Rossmann-fold domains"/>
    <property type="match status" value="1"/>
</dbReference>
<comment type="function">
    <text evidence="1">Involved in the reduction of the double bond between C-4 and C-5 during phthiocerol dimycocerosates (DIM A) and glycosylated phenolphthiocerol dimycocerosates (PGL) biosynthesis.</text>
</comment>
<comment type="similarity">
    <text evidence="2">Belongs to the saccharopine dehydrogenase family. Enoyl reductase subfamily.</text>
</comment>
<keyword id="KW-0444">Lipid biosynthesis</keyword>
<keyword id="KW-0443">Lipid metabolism</keyword>
<keyword id="KW-0560">Oxidoreductase</keyword>
<accession>A1KMU7</accession>